<accession>Q0CTQ7</accession>
<proteinExistence type="inferred from homology"/>
<sequence>MLLSFLPLLPLATAALTYRGADISSLLIEEDAGIAYKNLNGQTQALESILADNGVNSIRQRLWVNPSDGSYDLDYNLKLAKRAKAAGMSVYLDLHYSDTWADPSHQTTPAGWSTDDIGTLAWQVYNYTKEVCDTFAANDIALEMVSIGNEIRNGLLWPLGATDSYPNIARLLHSGAWGVKDSALATTPQILLHLDNGWDWAAQKYFYDTVLAAGSELTSADFDLIGVSYYPFYNADATLSALKTSLGNLASAYGKKVLVVETNWPVACPNPEYQFPADLADIPFSVDGQSTFLRRLGEVVAGTDGGAGVYYWEPAWTKNAGLGSSCQDNLLVDYNTDQVRASISALGGI</sequence>
<gene>
    <name type="primary">galA</name>
    <name type="ORF">ATEG_02927</name>
</gene>
<feature type="signal peptide" evidence="2">
    <location>
        <begin position="1"/>
        <end position="15"/>
    </location>
</feature>
<feature type="chain" id="PRO_0000394949" description="Probable arabinogalactan endo-beta-1,4-galactanase A">
    <location>
        <begin position="16"/>
        <end position="349"/>
    </location>
</feature>
<feature type="active site" description="Proton donor" evidence="1">
    <location>
        <position position="150"/>
    </location>
</feature>
<feature type="active site" description="Nucleophile" evidence="1">
    <location>
        <position position="261"/>
    </location>
</feature>
<feature type="glycosylation site" description="N-linked (GlcNAc...) asparagine" evidence="2">
    <location>
        <position position="126"/>
    </location>
</feature>
<comment type="function">
    <text evidence="1">Endogalactanase involved in the degradation of plant cell wall polysaccharides, and more particularly of hairy regions of pectin.</text>
</comment>
<comment type="catalytic activity">
    <reaction>
        <text>The enzyme specifically hydrolyzes (1-&gt;4)-beta-D-galactosidic linkages in type I arabinogalactans.</text>
        <dbReference type="EC" id="3.2.1.89"/>
    </reaction>
</comment>
<comment type="subcellular location">
    <subcellularLocation>
        <location evidence="1">Secreted</location>
    </subcellularLocation>
</comment>
<comment type="similarity">
    <text evidence="3">Belongs to the glycosyl hydrolase 53 family.</text>
</comment>
<keyword id="KW-0119">Carbohydrate metabolism</keyword>
<keyword id="KW-0961">Cell wall biogenesis/degradation</keyword>
<keyword id="KW-0325">Glycoprotein</keyword>
<keyword id="KW-0326">Glycosidase</keyword>
<keyword id="KW-0378">Hydrolase</keyword>
<keyword id="KW-0624">Polysaccharide degradation</keyword>
<keyword id="KW-1185">Reference proteome</keyword>
<keyword id="KW-0964">Secreted</keyword>
<keyword id="KW-0732">Signal</keyword>
<protein>
    <recommendedName>
        <fullName>Probable arabinogalactan endo-beta-1,4-galactanase A</fullName>
        <ecNumber>3.2.1.89</ecNumber>
    </recommendedName>
    <alternativeName>
        <fullName>Endo-1,4-beta-galactanase A</fullName>
        <shortName>Galactanase A</shortName>
    </alternativeName>
</protein>
<evidence type="ECO:0000250" key="1"/>
<evidence type="ECO:0000255" key="2"/>
<evidence type="ECO:0000305" key="3"/>
<dbReference type="EC" id="3.2.1.89"/>
<dbReference type="EMBL" id="CH476597">
    <property type="protein sequence ID" value="EAU36201.1"/>
    <property type="molecule type" value="Genomic_DNA"/>
</dbReference>
<dbReference type="RefSeq" id="XP_001212105.1">
    <property type="nucleotide sequence ID" value="XM_001212105.1"/>
</dbReference>
<dbReference type="SMR" id="Q0CTQ7"/>
<dbReference type="STRING" id="341663.Q0CTQ7"/>
<dbReference type="GlyCosmos" id="Q0CTQ7">
    <property type="glycosylation" value="1 site, No reported glycans"/>
</dbReference>
<dbReference type="EnsemblFungi" id="EAU36201">
    <property type="protein sequence ID" value="EAU36201"/>
    <property type="gene ID" value="ATEG_02927"/>
</dbReference>
<dbReference type="GeneID" id="4317469"/>
<dbReference type="VEuPathDB" id="FungiDB:ATEG_02927"/>
<dbReference type="eggNOG" id="ENOG502QU6R">
    <property type="taxonomic scope" value="Eukaryota"/>
</dbReference>
<dbReference type="HOGENOM" id="CLU_011259_0_0_1"/>
<dbReference type="OMA" id="KYIHDEW"/>
<dbReference type="OrthoDB" id="110914at2759"/>
<dbReference type="Proteomes" id="UP000007963">
    <property type="component" value="Unassembled WGS sequence"/>
</dbReference>
<dbReference type="GO" id="GO:0005576">
    <property type="term" value="C:extracellular region"/>
    <property type="evidence" value="ECO:0000250"/>
    <property type="project" value="UniProtKB"/>
</dbReference>
<dbReference type="GO" id="GO:0031218">
    <property type="term" value="F:arabinogalactan endo-1,4-beta-galactosidase activity"/>
    <property type="evidence" value="ECO:0000250"/>
    <property type="project" value="UniProtKB"/>
</dbReference>
<dbReference type="GO" id="GO:0015926">
    <property type="term" value="F:glucosidase activity"/>
    <property type="evidence" value="ECO:0007669"/>
    <property type="project" value="InterPro"/>
</dbReference>
<dbReference type="GO" id="GO:0071555">
    <property type="term" value="P:cell wall organization"/>
    <property type="evidence" value="ECO:0007669"/>
    <property type="project" value="UniProtKB-KW"/>
</dbReference>
<dbReference type="GO" id="GO:0045490">
    <property type="term" value="P:pectin catabolic process"/>
    <property type="evidence" value="ECO:0000250"/>
    <property type="project" value="UniProtKB"/>
</dbReference>
<dbReference type="FunFam" id="3.20.20.80:FF:000077">
    <property type="entry name" value="Arabinogalactan endo-beta-1,4-galactanase"/>
    <property type="match status" value="1"/>
</dbReference>
<dbReference type="Gene3D" id="3.20.20.80">
    <property type="entry name" value="Glycosidases"/>
    <property type="match status" value="1"/>
</dbReference>
<dbReference type="InterPro" id="IPR011683">
    <property type="entry name" value="Glyco_hydro_53"/>
</dbReference>
<dbReference type="InterPro" id="IPR017853">
    <property type="entry name" value="Glycoside_hydrolase_SF"/>
</dbReference>
<dbReference type="PANTHER" id="PTHR34983">
    <property type="entry name" value="ARABINOGALACTAN ENDO-BETA-1,4-GALACTANASE A"/>
    <property type="match status" value="1"/>
</dbReference>
<dbReference type="PANTHER" id="PTHR34983:SF1">
    <property type="entry name" value="ARABINOGALACTAN ENDO-BETA-1,4-GALACTANASE A"/>
    <property type="match status" value="1"/>
</dbReference>
<dbReference type="Pfam" id="PF07745">
    <property type="entry name" value="Glyco_hydro_53"/>
    <property type="match status" value="1"/>
</dbReference>
<dbReference type="SUPFAM" id="SSF51445">
    <property type="entry name" value="(Trans)glycosidases"/>
    <property type="match status" value="1"/>
</dbReference>
<reference key="1">
    <citation type="submission" date="2005-09" db="EMBL/GenBank/DDBJ databases">
        <title>Annotation of the Aspergillus terreus NIH2624 genome.</title>
        <authorList>
            <person name="Birren B.W."/>
            <person name="Lander E.S."/>
            <person name="Galagan J.E."/>
            <person name="Nusbaum C."/>
            <person name="Devon K."/>
            <person name="Henn M."/>
            <person name="Ma L.-J."/>
            <person name="Jaffe D.B."/>
            <person name="Butler J."/>
            <person name="Alvarez P."/>
            <person name="Gnerre S."/>
            <person name="Grabherr M."/>
            <person name="Kleber M."/>
            <person name="Mauceli E.W."/>
            <person name="Brockman W."/>
            <person name="Rounsley S."/>
            <person name="Young S.K."/>
            <person name="LaButti K."/>
            <person name="Pushparaj V."/>
            <person name="DeCaprio D."/>
            <person name="Crawford M."/>
            <person name="Koehrsen M."/>
            <person name="Engels R."/>
            <person name="Montgomery P."/>
            <person name="Pearson M."/>
            <person name="Howarth C."/>
            <person name="Larson L."/>
            <person name="Luoma S."/>
            <person name="White J."/>
            <person name="Alvarado L."/>
            <person name="Kodira C.D."/>
            <person name="Zeng Q."/>
            <person name="Oleary S."/>
            <person name="Yandava C."/>
            <person name="Denning D.W."/>
            <person name="Nierman W.C."/>
            <person name="Milne T."/>
            <person name="Madden K."/>
        </authorList>
    </citation>
    <scope>NUCLEOTIDE SEQUENCE [LARGE SCALE GENOMIC DNA]</scope>
    <source>
        <strain>NIH 2624 / FGSC A1156</strain>
    </source>
</reference>
<name>GANA_ASPTN</name>
<organism>
    <name type="scientific">Aspergillus terreus (strain NIH 2624 / FGSC A1156)</name>
    <dbReference type="NCBI Taxonomy" id="341663"/>
    <lineage>
        <taxon>Eukaryota</taxon>
        <taxon>Fungi</taxon>
        <taxon>Dikarya</taxon>
        <taxon>Ascomycota</taxon>
        <taxon>Pezizomycotina</taxon>
        <taxon>Eurotiomycetes</taxon>
        <taxon>Eurotiomycetidae</taxon>
        <taxon>Eurotiales</taxon>
        <taxon>Aspergillaceae</taxon>
        <taxon>Aspergillus</taxon>
        <taxon>Aspergillus subgen. Circumdati</taxon>
    </lineage>
</organism>